<keyword id="KW-0997">Cell inner membrane</keyword>
<keyword id="KW-1003">Cell membrane</keyword>
<keyword id="KW-0472">Membrane</keyword>
<keyword id="KW-0520">NAD</keyword>
<keyword id="KW-0874">Quinone</keyword>
<keyword id="KW-1185">Reference proteome</keyword>
<keyword id="KW-1278">Translocase</keyword>
<keyword id="KW-0813">Transport</keyword>
<keyword id="KW-0830">Ubiquinone</keyword>
<name>NUOD_DINSH</name>
<protein>
    <recommendedName>
        <fullName evidence="1">NADH-quinone oxidoreductase subunit D</fullName>
        <ecNumber evidence="1">7.1.1.-</ecNumber>
    </recommendedName>
    <alternativeName>
        <fullName evidence="1">NADH dehydrogenase I subunit D</fullName>
    </alternativeName>
    <alternativeName>
        <fullName evidence="1">NDH-1 subunit D</fullName>
    </alternativeName>
</protein>
<sequence length="404" mass="45875">MMDGTNFDDALTGEQKIRNFNINFGPQHPAAHGVLRLVLELDGEIVERCDPHIGLLHRGTEKLMESRTYLQNLPYFDRLDYVAPMNQEHAWCLAIEKLTGTVVPRRGSLIRVLYCEIGRILNHLLNITTQAMDVGALTPPLWGFEEREKLMVFYERACGARLHAAYFRPGGVHQDLPPDLLDDIEAWSHEFPSVMDDIDGLLTENRIFKQRNCDIGVVTEEEILEWGYSGVMVRGSGLAWDLRRAQPYECYDEFDFQIPVGKNGDCYDRYLVRMQEMRESLKIIQQAIVKLRETKGDVLARGKLTPPSRADMKTSMEALIHHFKLYTEGFHVPAGEVYAAVEAPKGEFGVFLKSDGTNRPYRAKIRAPGYLHLQSMDHVAKGHQLADVAAIIGTMDVVFGEIDR</sequence>
<comment type="function">
    <text evidence="1">NDH-1 shuttles electrons from NADH, via FMN and iron-sulfur (Fe-S) centers, to quinones in the respiratory chain. The immediate electron acceptor for the enzyme in this species is believed to be ubiquinone. Couples the redox reaction to proton translocation (for every two electrons transferred, four hydrogen ions are translocated across the cytoplasmic membrane), and thus conserves the redox energy in a proton gradient.</text>
</comment>
<comment type="catalytic activity">
    <reaction evidence="1">
        <text>a quinone + NADH + 5 H(+)(in) = a quinol + NAD(+) + 4 H(+)(out)</text>
        <dbReference type="Rhea" id="RHEA:57888"/>
        <dbReference type="ChEBI" id="CHEBI:15378"/>
        <dbReference type="ChEBI" id="CHEBI:24646"/>
        <dbReference type="ChEBI" id="CHEBI:57540"/>
        <dbReference type="ChEBI" id="CHEBI:57945"/>
        <dbReference type="ChEBI" id="CHEBI:132124"/>
    </reaction>
</comment>
<comment type="subunit">
    <text evidence="1">NDH-1 is composed of 14 different subunits. Subunits NuoB, C, D, E, F, and G constitute the peripheral sector of the complex.</text>
</comment>
<comment type="subcellular location">
    <subcellularLocation>
        <location evidence="1">Cell inner membrane</location>
        <topology evidence="1">Peripheral membrane protein</topology>
        <orientation evidence="1">Cytoplasmic side</orientation>
    </subcellularLocation>
</comment>
<comment type="similarity">
    <text evidence="1">Belongs to the complex I 49 kDa subunit family.</text>
</comment>
<gene>
    <name evidence="1" type="primary">nuoD</name>
    <name type="ordered locus">Dshi_1311</name>
</gene>
<organism>
    <name type="scientific">Dinoroseobacter shibae (strain DSM 16493 / NCIMB 14021 / DFL 12)</name>
    <dbReference type="NCBI Taxonomy" id="398580"/>
    <lineage>
        <taxon>Bacteria</taxon>
        <taxon>Pseudomonadati</taxon>
        <taxon>Pseudomonadota</taxon>
        <taxon>Alphaproteobacteria</taxon>
        <taxon>Rhodobacterales</taxon>
        <taxon>Roseobacteraceae</taxon>
        <taxon>Dinoroseobacter</taxon>
    </lineage>
</organism>
<accession>A8LIT9</accession>
<dbReference type="EC" id="7.1.1.-" evidence="1"/>
<dbReference type="EMBL" id="CP000830">
    <property type="protein sequence ID" value="ABV93053.1"/>
    <property type="molecule type" value="Genomic_DNA"/>
</dbReference>
<dbReference type="SMR" id="A8LIT9"/>
<dbReference type="STRING" id="398580.Dshi_1311"/>
<dbReference type="KEGG" id="dsh:Dshi_1311"/>
<dbReference type="eggNOG" id="COG0649">
    <property type="taxonomic scope" value="Bacteria"/>
</dbReference>
<dbReference type="HOGENOM" id="CLU_015134_1_1_5"/>
<dbReference type="OrthoDB" id="9801496at2"/>
<dbReference type="Proteomes" id="UP000006833">
    <property type="component" value="Chromosome"/>
</dbReference>
<dbReference type="GO" id="GO:0005886">
    <property type="term" value="C:plasma membrane"/>
    <property type="evidence" value="ECO:0007669"/>
    <property type="project" value="UniProtKB-SubCell"/>
</dbReference>
<dbReference type="GO" id="GO:0051287">
    <property type="term" value="F:NAD binding"/>
    <property type="evidence" value="ECO:0007669"/>
    <property type="project" value="InterPro"/>
</dbReference>
<dbReference type="GO" id="GO:0050136">
    <property type="term" value="F:NADH:ubiquinone reductase (non-electrogenic) activity"/>
    <property type="evidence" value="ECO:0007669"/>
    <property type="project" value="UniProtKB-UniRule"/>
</dbReference>
<dbReference type="GO" id="GO:0048038">
    <property type="term" value="F:quinone binding"/>
    <property type="evidence" value="ECO:0007669"/>
    <property type="project" value="UniProtKB-KW"/>
</dbReference>
<dbReference type="FunFam" id="1.10.645.10:FF:000005">
    <property type="entry name" value="NADH-quinone oxidoreductase subunit D"/>
    <property type="match status" value="1"/>
</dbReference>
<dbReference type="Gene3D" id="1.10.645.10">
    <property type="entry name" value="Cytochrome-c3 Hydrogenase, chain B"/>
    <property type="match status" value="1"/>
</dbReference>
<dbReference type="HAMAP" id="MF_01358">
    <property type="entry name" value="NDH1_NuoD"/>
    <property type="match status" value="1"/>
</dbReference>
<dbReference type="InterPro" id="IPR001135">
    <property type="entry name" value="NADH_Q_OxRdtase_suD"/>
</dbReference>
<dbReference type="InterPro" id="IPR014029">
    <property type="entry name" value="NADH_UbQ_OxRdtase_49kDa_CS"/>
</dbReference>
<dbReference type="InterPro" id="IPR022885">
    <property type="entry name" value="NDH1_su_D/H"/>
</dbReference>
<dbReference type="InterPro" id="IPR029014">
    <property type="entry name" value="NiFe-Hase_large"/>
</dbReference>
<dbReference type="NCBIfam" id="TIGR01962">
    <property type="entry name" value="NuoD"/>
    <property type="match status" value="1"/>
</dbReference>
<dbReference type="NCBIfam" id="NF004739">
    <property type="entry name" value="PRK06075.1"/>
    <property type="match status" value="1"/>
</dbReference>
<dbReference type="PANTHER" id="PTHR11993:SF10">
    <property type="entry name" value="NADH DEHYDROGENASE [UBIQUINONE] IRON-SULFUR PROTEIN 2, MITOCHONDRIAL"/>
    <property type="match status" value="1"/>
</dbReference>
<dbReference type="PANTHER" id="PTHR11993">
    <property type="entry name" value="NADH-UBIQUINONE OXIDOREDUCTASE 49 KDA SUBUNIT"/>
    <property type="match status" value="1"/>
</dbReference>
<dbReference type="Pfam" id="PF00346">
    <property type="entry name" value="Complex1_49kDa"/>
    <property type="match status" value="1"/>
</dbReference>
<dbReference type="SUPFAM" id="SSF56762">
    <property type="entry name" value="HydB/Nqo4-like"/>
    <property type="match status" value="1"/>
</dbReference>
<dbReference type="PROSITE" id="PS00535">
    <property type="entry name" value="COMPLEX1_49K"/>
    <property type="match status" value="1"/>
</dbReference>
<feature type="chain" id="PRO_0000357808" description="NADH-quinone oxidoreductase subunit D">
    <location>
        <begin position="1"/>
        <end position="404"/>
    </location>
</feature>
<evidence type="ECO:0000255" key="1">
    <source>
        <dbReference type="HAMAP-Rule" id="MF_01358"/>
    </source>
</evidence>
<reference key="1">
    <citation type="journal article" date="2010" name="ISME J.">
        <title>The complete genome sequence of the algal symbiont Dinoroseobacter shibae: a hitchhiker's guide to life in the sea.</title>
        <authorList>
            <person name="Wagner-Dobler I."/>
            <person name="Ballhausen B."/>
            <person name="Berger M."/>
            <person name="Brinkhoff T."/>
            <person name="Buchholz I."/>
            <person name="Bunk B."/>
            <person name="Cypionka H."/>
            <person name="Daniel R."/>
            <person name="Drepper T."/>
            <person name="Gerdts G."/>
            <person name="Hahnke S."/>
            <person name="Han C."/>
            <person name="Jahn D."/>
            <person name="Kalhoefer D."/>
            <person name="Kiss H."/>
            <person name="Klenk H.P."/>
            <person name="Kyrpides N."/>
            <person name="Liebl W."/>
            <person name="Liesegang H."/>
            <person name="Meincke L."/>
            <person name="Pati A."/>
            <person name="Petersen J."/>
            <person name="Piekarski T."/>
            <person name="Pommerenke C."/>
            <person name="Pradella S."/>
            <person name="Pukall R."/>
            <person name="Rabus R."/>
            <person name="Stackebrandt E."/>
            <person name="Thole S."/>
            <person name="Thompson L."/>
            <person name="Tielen P."/>
            <person name="Tomasch J."/>
            <person name="von Jan M."/>
            <person name="Wanphrut N."/>
            <person name="Wichels A."/>
            <person name="Zech H."/>
            <person name="Simon M."/>
        </authorList>
    </citation>
    <scope>NUCLEOTIDE SEQUENCE [LARGE SCALE GENOMIC DNA]</scope>
    <source>
        <strain>DSM 16493 / NCIMB 14021 / DFL 12</strain>
    </source>
</reference>
<proteinExistence type="inferred from homology"/>